<sequence>METATLVAISISGLLVSFTGYALYTAFGQPSQQLRDPFEEHGD</sequence>
<reference key="1">
    <citation type="journal article" date="2008" name="Nucleic Acids Res.">
        <title>The complete nucleotide sequences of the five genetically distinct plastid genomes of Oenothera, subsection Oenothera: I. Sequence evaluation and plastome evolution.</title>
        <authorList>
            <person name="Greiner S."/>
            <person name="Wang X."/>
            <person name="Rauwolf U."/>
            <person name="Silber M.V."/>
            <person name="Mayer K."/>
            <person name="Meurer J."/>
            <person name="Haberer G."/>
            <person name="Herrmann R.G."/>
        </authorList>
    </citation>
    <scope>NUCLEOTIDE SEQUENCE [LARGE SCALE GENOMIC DNA]</scope>
    <source>
        <strain>cv. Rr-lamarckiana Sweden</strain>
    </source>
</reference>
<comment type="function">
    <text evidence="1">May play a role in photosystem I and II biogenesis.</text>
</comment>
<comment type="subcellular location">
    <subcellularLocation>
        <location evidence="1">Plastid</location>
        <location evidence="1">Chloroplast thylakoid membrane</location>
        <topology evidence="1">Single-pass membrane protein</topology>
    </subcellularLocation>
</comment>
<comment type="similarity">
    <text evidence="1">Belongs to the PsbN family.</text>
</comment>
<comment type="caution">
    <text evidence="1">Originally thought to be a component of PSII; based on experiments in Synechocystis, N.tabacum and barley, and its absence from PSII in T.elongatus and T.vulcanus, this is probably not true.</text>
</comment>
<geneLocation type="chloroplast"/>
<feature type="chain" id="PRO_0000362208" description="Protein PsbN">
    <location>
        <begin position="1"/>
        <end position="43"/>
    </location>
</feature>
<feature type="transmembrane region" description="Helical" evidence="1">
    <location>
        <begin position="5"/>
        <end position="27"/>
    </location>
</feature>
<gene>
    <name evidence="1" type="primary">psbN</name>
</gene>
<protein>
    <recommendedName>
        <fullName evidence="1">Protein PsbN</fullName>
    </recommendedName>
</protein>
<accession>B0Z572</accession>
<keyword id="KW-0150">Chloroplast</keyword>
<keyword id="KW-0472">Membrane</keyword>
<keyword id="KW-0934">Plastid</keyword>
<keyword id="KW-0793">Thylakoid</keyword>
<keyword id="KW-0812">Transmembrane</keyword>
<keyword id="KW-1133">Transmembrane helix</keyword>
<name>PSBN_OENGL</name>
<dbReference type="EMBL" id="EU262890">
    <property type="protein sequence ID" value="ABX10065.1"/>
    <property type="molecule type" value="Genomic_DNA"/>
</dbReference>
<dbReference type="RefSeq" id="YP_001687311.1">
    <property type="nucleotide sequence ID" value="NC_010360.2"/>
</dbReference>
<dbReference type="SMR" id="B0Z572"/>
<dbReference type="GeneID" id="5955345"/>
<dbReference type="GO" id="GO:0009535">
    <property type="term" value="C:chloroplast thylakoid membrane"/>
    <property type="evidence" value="ECO:0007669"/>
    <property type="project" value="UniProtKB-SubCell"/>
</dbReference>
<dbReference type="GO" id="GO:0015979">
    <property type="term" value="P:photosynthesis"/>
    <property type="evidence" value="ECO:0007669"/>
    <property type="project" value="InterPro"/>
</dbReference>
<dbReference type="HAMAP" id="MF_00293">
    <property type="entry name" value="PSII_PsbN"/>
    <property type="match status" value="1"/>
</dbReference>
<dbReference type="InterPro" id="IPR003398">
    <property type="entry name" value="PSII_PsbN"/>
</dbReference>
<dbReference type="PANTHER" id="PTHR35326">
    <property type="entry name" value="PROTEIN PSBN"/>
    <property type="match status" value="1"/>
</dbReference>
<dbReference type="PANTHER" id="PTHR35326:SF3">
    <property type="entry name" value="PROTEIN PSBN"/>
    <property type="match status" value="1"/>
</dbReference>
<dbReference type="Pfam" id="PF02468">
    <property type="entry name" value="PsbN"/>
    <property type="match status" value="1"/>
</dbReference>
<proteinExistence type="inferred from homology"/>
<evidence type="ECO:0000255" key="1">
    <source>
        <dbReference type="HAMAP-Rule" id="MF_00293"/>
    </source>
</evidence>
<organism>
    <name type="scientific">Oenothera glazioviana</name>
    <name type="common">Large-flowered evening primrose</name>
    <name type="synonym">Oenothera erythrosepala</name>
    <dbReference type="NCBI Taxonomy" id="482428"/>
    <lineage>
        <taxon>Eukaryota</taxon>
        <taxon>Viridiplantae</taxon>
        <taxon>Streptophyta</taxon>
        <taxon>Embryophyta</taxon>
        <taxon>Tracheophyta</taxon>
        <taxon>Spermatophyta</taxon>
        <taxon>Magnoliopsida</taxon>
        <taxon>eudicotyledons</taxon>
        <taxon>Gunneridae</taxon>
        <taxon>Pentapetalae</taxon>
        <taxon>rosids</taxon>
        <taxon>malvids</taxon>
        <taxon>Myrtales</taxon>
        <taxon>Onagraceae</taxon>
        <taxon>Onagroideae</taxon>
        <taxon>Onagreae</taxon>
        <taxon>Oenothera</taxon>
    </lineage>
</organism>